<reference key="1">
    <citation type="submission" date="2006-10" db="EMBL/GenBank/DDBJ databases">
        <authorList>
            <person name="Fleischmann R.D."/>
            <person name="Dodson R.J."/>
            <person name="Haft D.H."/>
            <person name="Merkel J.S."/>
            <person name="Nelson W.C."/>
            <person name="Fraser C.M."/>
        </authorList>
    </citation>
    <scope>NUCLEOTIDE SEQUENCE [LARGE SCALE GENOMIC DNA]</scope>
    <source>
        <strain>104</strain>
    </source>
</reference>
<proteinExistence type="inferred from homology"/>
<protein>
    <recommendedName>
        <fullName evidence="1">Small ribosomal subunit protein bS20</fullName>
    </recommendedName>
    <alternativeName>
        <fullName evidence="3">30S ribosomal protein S20</fullName>
    </alternativeName>
</protein>
<comment type="function">
    <text evidence="1">Binds directly to 16S ribosomal RNA.</text>
</comment>
<comment type="similarity">
    <text evidence="1">Belongs to the bacterial ribosomal protein bS20 family.</text>
</comment>
<organism>
    <name type="scientific">Mycobacterium avium (strain 104)</name>
    <dbReference type="NCBI Taxonomy" id="243243"/>
    <lineage>
        <taxon>Bacteria</taxon>
        <taxon>Bacillati</taxon>
        <taxon>Actinomycetota</taxon>
        <taxon>Actinomycetes</taxon>
        <taxon>Mycobacteriales</taxon>
        <taxon>Mycobacteriaceae</taxon>
        <taxon>Mycobacterium</taxon>
        <taxon>Mycobacterium avium complex (MAC)</taxon>
    </lineage>
</organism>
<feature type="chain" id="PRO_1000014604" description="Small ribosomal subunit protein bS20">
    <location>
        <begin position="1"/>
        <end position="86"/>
    </location>
</feature>
<feature type="region of interest" description="Disordered" evidence="2">
    <location>
        <begin position="1"/>
        <end position="25"/>
    </location>
</feature>
<gene>
    <name evidence="1" type="primary">rpsT</name>
    <name type="ordered locus">MAV_1770</name>
</gene>
<name>RS20_MYCA1</name>
<accession>A0QDK7</accession>
<evidence type="ECO:0000255" key="1">
    <source>
        <dbReference type="HAMAP-Rule" id="MF_00500"/>
    </source>
</evidence>
<evidence type="ECO:0000256" key="2">
    <source>
        <dbReference type="SAM" id="MobiDB-lite"/>
    </source>
</evidence>
<evidence type="ECO:0000305" key="3"/>
<dbReference type="EMBL" id="CP000479">
    <property type="protein sequence ID" value="ABK66900.1"/>
    <property type="molecule type" value="Genomic_DNA"/>
</dbReference>
<dbReference type="RefSeq" id="WP_003875905.1">
    <property type="nucleotide sequence ID" value="NC_008595.1"/>
</dbReference>
<dbReference type="SMR" id="A0QDK7"/>
<dbReference type="KEGG" id="mav:MAV_1770"/>
<dbReference type="HOGENOM" id="CLU_160655_0_1_11"/>
<dbReference type="Proteomes" id="UP000001574">
    <property type="component" value="Chromosome"/>
</dbReference>
<dbReference type="GO" id="GO:0005829">
    <property type="term" value="C:cytosol"/>
    <property type="evidence" value="ECO:0007669"/>
    <property type="project" value="TreeGrafter"/>
</dbReference>
<dbReference type="GO" id="GO:0015935">
    <property type="term" value="C:small ribosomal subunit"/>
    <property type="evidence" value="ECO:0007669"/>
    <property type="project" value="TreeGrafter"/>
</dbReference>
<dbReference type="GO" id="GO:0070181">
    <property type="term" value="F:small ribosomal subunit rRNA binding"/>
    <property type="evidence" value="ECO:0007669"/>
    <property type="project" value="TreeGrafter"/>
</dbReference>
<dbReference type="GO" id="GO:0003735">
    <property type="term" value="F:structural constituent of ribosome"/>
    <property type="evidence" value="ECO:0007669"/>
    <property type="project" value="InterPro"/>
</dbReference>
<dbReference type="GO" id="GO:0006412">
    <property type="term" value="P:translation"/>
    <property type="evidence" value="ECO:0007669"/>
    <property type="project" value="UniProtKB-UniRule"/>
</dbReference>
<dbReference type="FunFam" id="1.20.58.110:FF:000001">
    <property type="entry name" value="30S ribosomal protein S20"/>
    <property type="match status" value="1"/>
</dbReference>
<dbReference type="Gene3D" id="1.20.58.110">
    <property type="entry name" value="Ribosomal protein S20"/>
    <property type="match status" value="1"/>
</dbReference>
<dbReference type="HAMAP" id="MF_00500">
    <property type="entry name" value="Ribosomal_bS20"/>
    <property type="match status" value="1"/>
</dbReference>
<dbReference type="InterPro" id="IPR002583">
    <property type="entry name" value="Ribosomal_bS20"/>
</dbReference>
<dbReference type="InterPro" id="IPR036510">
    <property type="entry name" value="Ribosomal_bS20_sf"/>
</dbReference>
<dbReference type="NCBIfam" id="TIGR00029">
    <property type="entry name" value="S20"/>
    <property type="match status" value="1"/>
</dbReference>
<dbReference type="PANTHER" id="PTHR33398">
    <property type="entry name" value="30S RIBOSOMAL PROTEIN S20"/>
    <property type="match status" value="1"/>
</dbReference>
<dbReference type="PANTHER" id="PTHR33398:SF1">
    <property type="entry name" value="SMALL RIBOSOMAL SUBUNIT PROTEIN BS20C"/>
    <property type="match status" value="1"/>
</dbReference>
<dbReference type="Pfam" id="PF01649">
    <property type="entry name" value="Ribosomal_S20p"/>
    <property type="match status" value="1"/>
</dbReference>
<dbReference type="SUPFAM" id="SSF46992">
    <property type="entry name" value="Ribosomal protein S20"/>
    <property type="match status" value="1"/>
</dbReference>
<sequence length="86" mass="9479">MANIKSQQKRNKTNERARLRNKSVKSSLRTAVRAFREAAHAGDKEKAAELLVSTNRKLDKAASKGVIHKNQAANKKSALAQALNKL</sequence>
<keyword id="KW-0687">Ribonucleoprotein</keyword>
<keyword id="KW-0689">Ribosomal protein</keyword>
<keyword id="KW-0694">RNA-binding</keyword>
<keyword id="KW-0699">rRNA-binding</keyword>